<gene>
    <name type="ordered locus">DR_A0167</name>
</gene>
<protein>
    <recommendedName>
        <fullName evidence="1">UPF0215 protein DR_A0167</fullName>
    </recommendedName>
</protein>
<evidence type="ECO:0000255" key="1">
    <source>
        <dbReference type="HAMAP-Rule" id="MF_00582"/>
    </source>
</evidence>
<reference key="1">
    <citation type="journal article" date="1999" name="Science">
        <title>Genome sequence of the radioresistant bacterium Deinococcus radiodurans R1.</title>
        <authorList>
            <person name="White O."/>
            <person name="Eisen J.A."/>
            <person name="Heidelberg J.F."/>
            <person name="Hickey E.K."/>
            <person name="Peterson J.D."/>
            <person name="Dodson R.J."/>
            <person name="Haft D.H."/>
            <person name="Gwinn M.L."/>
            <person name="Nelson W.C."/>
            <person name="Richardson D.L."/>
            <person name="Moffat K.S."/>
            <person name="Qin H."/>
            <person name="Jiang L."/>
            <person name="Pamphile W."/>
            <person name="Crosby M."/>
            <person name="Shen M."/>
            <person name="Vamathevan J.J."/>
            <person name="Lam P."/>
            <person name="McDonald L.A."/>
            <person name="Utterback T.R."/>
            <person name="Zalewski C."/>
            <person name="Makarova K.S."/>
            <person name="Aravind L."/>
            <person name="Daly M.J."/>
            <person name="Minton K.W."/>
            <person name="Fleischmann R.D."/>
            <person name="Ketchum K.A."/>
            <person name="Nelson K.E."/>
            <person name="Salzberg S.L."/>
            <person name="Smith H.O."/>
            <person name="Venter J.C."/>
            <person name="Fraser C.M."/>
        </authorList>
    </citation>
    <scope>NUCLEOTIDE SEQUENCE [LARGE SCALE GENOMIC DNA]</scope>
    <source>
        <strain>ATCC 13939 / DSM 20539 / JCM 16871 / CCUG 27074 / LMG 4051 / NBRC 15346 / NCIMB 9279 / VKM B-1422 / R1</strain>
    </source>
</reference>
<sequence>MPVPVPRAYPRLSHAIGFDDAPFAREWRGDVRIFGAVYAGPTLHAVVSGRVRRDGRNATDELSRLVTAQAEHLQLVFLQGIALAGFNVVDLGALHARTGLPVLVVARRKPRLDRIRRALLEEVPGGARKWRLIEQAGEMEPCAGLYVQRAGLLLAEAEAALGTFCLTGRIPEPLRTAHLIAGGVTRGSSAGQRV</sequence>
<dbReference type="EMBL" id="AE001825">
    <property type="protein sequence ID" value="AAF12296.1"/>
    <property type="molecule type" value="Genomic_DNA"/>
</dbReference>
<dbReference type="PIR" id="B75613">
    <property type="entry name" value="B75613"/>
</dbReference>
<dbReference type="RefSeq" id="NP_285491.1">
    <property type="nucleotide sequence ID" value="NC_001264.1"/>
</dbReference>
<dbReference type="RefSeq" id="WP_010889427.1">
    <property type="nucleotide sequence ID" value="NC_001264.1"/>
</dbReference>
<dbReference type="SMR" id="Q9RYY6"/>
<dbReference type="STRING" id="243230.DR_A0167"/>
<dbReference type="PaxDb" id="243230-DR_A0167"/>
<dbReference type="EnsemblBacteria" id="AAF12296">
    <property type="protein sequence ID" value="AAF12296"/>
    <property type="gene ID" value="DR_A0167"/>
</dbReference>
<dbReference type="GeneID" id="69519062"/>
<dbReference type="KEGG" id="dra:DR_A0167"/>
<dbReference type="PATRIC" id="fig|243230.17.peg.3054"/>
<dbReference type="eggNOG" id="COG1628">
    <property type="taxonomic scope" value="Bacteria"/>
</dbReference>
<dbReference type="HOGENOM" id="CLU_095956_1_0_0"/>
<dbReference type="InParanoid" id="Q9RYY6"/>
<dbReference type="OrthoDB" id="25804at2"/>
<dbReference type="Proteomes" id="UP000002524">
    <property type="component" value="Chromosome 2"/>
</dbReference>
<dbReference type="Gene3D" id="3.30.2170.10">
    <property type="entry name" value="archaeoglobus fulgidus dsm 4304 superfamily"/>
    <property type="match status" value="1"/>
</dbReference>
<dbReference type="HAMAP" id="MF_00582">
    <property type="entry name" value="UPF0215"/>
    <property type="match status" value="1"/>
</dbReference>
<dbReference type="InterPro" id="IPR002802">
    <property type="entry name" value="Endo_dU"/>
</dbReference>
<dbReference type="PANTHER" id="PTHR39518">
    <property type="entry name" value="UPF0215 PROTEIN MJ1150"/>
    <property type="match status" value="1"/>
</dbReference>
<dbReference type="PANTHER" id="PTHR39518:SF2">
    <property type="entry name" value="UPF0215 PROTEIN MJ1150"/>
    <property type="match status" value="1"/>
</dbReference>
<dbReference type="Pfam" id="PF01949">
    <property type="entry name" value="DUF99"/>
    <property type="match status" value="1"/>
</dbReference>
<dbReference type="PIRSF" id="PIRSF006380">
    <property type="entry name" value="UCP006380"/>
    <property type="match status" value="1"/>
</dbReference>
<name>Y2867_DEIRA</name>
<feature type="chain" id="PRO_0000149248" description="UPF0215 protein DR_A0167">
    <location>
        <begin position="1"/>
        <end position="194"/>
    </location>
</feature>
<comment type="similarity">
    <text evidence="1">Belongs to the UPF0215 family.</text>
</comment>
<proteinExistence type="inferred from homology"/>
<accession>Q9RYY6</accession>
<organism>
    <name type="scientific">Deinococcus radiodurans (strain ATCC 13939 / DSM 20539 / JCM 16871 / CCUG 27074 / LMG 4051 / NBRC 15346 / NCIMB 9279 / VKM B-1422 / R1)</name>
    <dbReference type="NCBI Taxonomy" id="243230"/>
    <lineage>
        <taxon>Bacteria</taxon>
        <taxon>Thermotogati</taxon>
        <taxon>Deinococcota</taxon>
        <taxon>Deinococci</taxon>
        <taxon>Deinococcales</taxon>
        <taxon>Deinococcaceae</taxon>
        <taxon>Deinococcus</taxon>
    </lineage>
</organism>
<keyword id="KW-1185">Reference proteome</keyword>